<sequence length="348" mass="39762">MLLSILVALCLCVRLALGVRGAPCEAVRIPMCRHMPWNITRMPNHLHHSTQENAILAIEQYEELVDVNCSSVLRFFLCAMYAPICTLEFLHDPIKPCKSVCQRARDDCEPLMKMYNHSWPESLACDELPVYDRGVCISPEAIVTDLPEDVKWIDITPDMMVQERSFDADCKHLSPDRCKCKKVKPTLATYLSKNYSYVIHAKIKAVQRSGCNEVTTVVDVKEIFKSSSPIPRTQVPLITNSSCQCPHILPHQDVLIMCYERRSRMMLLENCLVEKWRDQLSRRSTQWEERLQEQQRTTQDKKQIASRTSRSNPPKPKGRSPASKPASPKKNIKARSAPKKSNPKKSTS</sequence>
<comment type="function">
    <text evidence="2 3 10 11">Soluble frizzled-related proteins (sFRPS) function as modulators of Wnt signaling through direct interaction with Wnts. They have a role in regulating cell growth and differentiation in specific cell types (By similarity). SFRP4 plays a role in bone morphogenesis (By similarity). May also act as a regulator of adult uterine morphology and function (PubMed:12063187). May also increase apoptosis during ovulation possibly through modulation of FZ1/FZ4/WNT4 signaling (PubMed:12960062). Has phosphaturic effects by specifically inhibiting sodium-dependent phosphate uptake (By similarity).</text>
</comment>
<comment type="subcellular location">
    <subcellularLocation>
        <location evidence="2">Secreted</location>
    </subcellularLocation>
</comment>
<comment type="tissue specificity">
    <text evidence="9">Expressed in the involuting mammary gland, ovarian corpus luteum and prostate. In ovaries, low levels found in granulosa cells. High levels in corpora lutea of pregnant animals.</text>
</comment>
<comment type="developmental stage">
    <text evidence="8">Expressed from day 9 of pregnant uterus. Highest level at day 12, specifically in the decidua and weakly, in the myometrium. Levels decline thereafter.</text>
</comment>
<comment type="induction">
    <text evidence="8 9">Up-regulated 48 hours after estrogen treatment mainly in the uterine endometrial stroma (PubMed:12063187). Induced in ovarian granulosa cells after 12 hours treatment with chorionic gonadotrophin (CG). Further up-regulated in corpora lutea by the luteotrophic hormone PRL (PubMed:12960062).</text>
</comment>
<comment type="domain">
    <text evidence="1">The FZ domain is involved in binding with Wnt ligands.</text>
</comment>
<comment type="similarity">
    <text evidence="12">Belongs to the secreted frizzled-related protein (sFRP) family.</text>
</comment>
<keyword id="KW-0217">Developmental protein</keyword>
<keyword id="KW-0221">Differentiation</keyword>
<keyword id="KW-1015">Disulfide bond</keyword>
<keyword id="KW-0325">Glycoprotein</keyword>
<keyword id="KW-1185">Reference proteome</keyword>
<keyword id="KW-0964">Secreted</keyword>
<keyword id="KW-0732">Signal</keyword>
<keyword id="KW-0879">Wnt signaling pathway</keyword>
<gene>
    <name type="primary">Sfrp4</name>
    <name type="synonym">Ddc4</name>
    <name type="synonym">Frp</name>
</gene>
<organism>
    <name type="scientific">Rattus norvegicus</name>
    <name type="common">Rat</name>
    <dbReference type="NCBI Taxonomy" id="10116"/>
    <lineage>
        <taxon>Eukaryota</taxon>
        <taxon>Metazoa</taxon>
        <taxon>Chordata</taxon>
        <taxon>Craniata</taxon>
        <taxon>Vertebrata</taxon>
        <taxon>Euteleostomi</taxon>
        <taxon>Mammalia</taxon>
        <taxon>Eutheria</taxon>
        <taxon>Euarchontoglires</taxon>
        <taxon>Glires</taxon>
        <taxon>Rodentia</taxon>
        <taxon>Myomorpha</taxon>
        <taxon>Muroidea</taxon>
        <taxon>Muridae</taxon>
        <taxon>Murinae</taxon>
        <taxon>Rattus</taxon>
    </lineage>
</organism>
<dbReference type="EMBL" id="AF012891">
    <property type="protein sequence ID" value="AAB65431.1"/>
    <property type="molecule type" value="mRNA"/>
</dbReference>
<dbReference type="EMBL" id="AF140346">
    <property type="protein sequence ID" value="AAF66480.1"/>
    <property type="molecule type" value="mRNA"/>
</dbReference>
<dbReference type="EMBL" id="AF140347">
    <property type="protein sequence ID" value="AAF66481.1"/>
    <property type="molecule type" value="Genomic_DNA"/>
</dbReference>
<dbReference type="PIR" id="JC7735">
    <property type="entry name" value="JC7735"/>
</dbReference>
<dbReference type="RefSeq" id="NP_445996.1">
    <property type="nucleotide sequence ID" value="NM_053544.1"/>
</dbReference>
<dbReference type="SMR" id="Q9JLS4"/>
<dbReference type="FunCoup" id="Q9JLS4">
    <property type="interactions" value="306"/>
</dbReference>
<dbReference type="IntAct" id="Q9JLS4">
    <property type="interactions" value="1"/>
</dbReference>
<dbReference type="STRING" id="10116.ENSRNOP00000075046"/>
<dbReference type="CarbonylDB" id="Q9JLS4"/>
<dbReference type="GlyCosmos" id="Q9JLS4">
    <property type="glycosylation" value="5 sites, No reported glycans"/>
</dbReference>
<dbReference type="GlyGen" id="Q9JLS4">
    <property type="glycosylation" value="5 sites"/>
</dbReference>
<dbReference type="PhosphoSitePlus" id="Q9JLS4"/>
<dbReference type="PaxDb" id="10116-ENSRNOP00000025645"/>
<dbReference type="GeneID" id="89803"/>
<dbReference type="KEGG" id="rno:89803"/>
<dbReference type="UCSC" id="RGD:621075">
    <property type="organism name" value="rat"/>
</dbReference>
<dbReference type="AGR" id="RGD:621075"/>
<dbReference type="CTD" id="6424"/>
<dbReference type="RGD" id="621075">
    <property type="gene designation" value="Sfrp4"/>
</dbReference>
<dbReference type="eggNOG" id="KOG3577">
    <property type="taxonomic scope" value="Eukaryota"/>
</dbReference>
<dbReference type="InParanoid" id="Q9JLS4"/>
<dbReference type="PhylomeDB" id="Q9JLS4"/>
<dbReference type="PRO" id="PR:Q9JLS4"/>
<dbReference type="Proteomes" id="UP000002494">
    <property type="component" value="Unplaced"/>
</dbReference>
<dbReference type="GO" id="GO:0009986">
    <property type="term" value="C:cell surface"/>
    <property type="evidence" value="ECO:0000266"/>
    <property type="project" value="RGD"/>
</dbReference>
<dbReference type="GO" id="GO:0005737">
    <property type="term" value="C:cytoplasm"/>
    <property type="evidence" value="ECO:0000266"/>
    <property type="project" value="RGD"/>
</dbReference>
<dbReference type="GO" id="GO:0005615">
    <property type="term" value="C:extracellular space"/>
    <property type="evidence" value="ECO:0000314"/>
    <property type="project" value="RGD"/>
</dbReference>
<dbReference type="GO" id="GO:0005634">
    <property type="term" value="C:nucleus"/>
    <property type="evidence" value="ECO:0000266"/>
    <property type="project" value="RGD"/>
</dbReference>
<dbReference type="GO" id="GO:0017147">
    <property type="term" value="F:Wnt-protein binding"/>
    <property type="evidence" value="ECO:0000353"/>
    <property type="project" value="RGD"/>
</dbReference>
<dbReference type="GO" id="GO:0060349">
    <property type="term" value="P:bone morphogenesis"/>
    <property type="evidence" value="ECO:0000250"/>
    <property type="project" value="UniProtKB"/>
</dbReference>
<dbReference type="GO" id="GO:0060070">
    <property type="term" value="P:canonical Wnt signaling pathway"/>
    <property type="evidence" value="ECO:0000318"/>
    <property type="project" value="GO_Central"/>
</dbReference>
<dbReference type="GO" id="GO:0030154">
    <property type="term" value="P:cell differentiation"/>
    <property type="evidence" value="ECO:0007669"/>
    <property type="project" value="UniProtKB-KW"/>
</dbReference>
<dbReference type="GO" id="GO:0046697">
    <property type="term" value="P:decidualization"/>
    <property type="evidence" value="ECO:0000270"/>
    <property type="project" value="RGD"/>
</dbReference>
<dbReference type="GO" id="GO:0007565">
    <property type="term" value="P:female pregnancy"/>
    <property type="evidence" value="ECO:0000270"/>
    <property type="project" value="RGD"/>
</dbReference>
<dbReference type="GO" id="GO:0060056">
    <property type="term" value="P:mammary gland involution"/>
    <property type="evidence" value="ECO:0000270"/>
    <property type="project" value="RGD"/>
</dbReference>
<dbReference type="GO" id="GO:0090090">
    <property type="term" value="P:negative regulation of canonical Wnt signaling pathway"/>
    <property type="evidence" value="ECO:0000314"/>
    <property type="project" value="BHF-UCL"/>
</dbReference>
<dbReference type="GO" id="GO:0008285">
    <property type="term" value="P:negative regulation of cell population proliferation"/>
    <property type="evidence" value="ECO:0000314"/>
    <property type="project" value="RGD"/>
</dbReference>
<dbReference type="GO" id="GO:0046329">
    <property type="term" value="P:negative regulation of JNK cascade"/>
    <property type="evidence" value="ECO:0000314"/>
    <property type="project" value="RGD"/>
</dbReference>
<dbReference type="GO" id="GO:2000051">
    <property type="term" value="P:negative regulation of non-canonical Wnt signaling pathway"/>
    <property type="evidence" value="ECO:0000250"/>
    <property type="project" value="UniProtKB"/>
</dbReference>
<dbReference type="GO" id="GO:2000119">
    <property type="term" value="P:negative regulation of sodium-dependent phosphate transport"/>
    <property type="evidence" value="ECO:0000266"/>
    <property type="project" value="RGD"/>
</dbReference>
<dbReference type="GO" id="GO:0035567">
    <property type="term" value="P:non-canonical Wnt signaling pathway"/>
    <property type="evidence" value="ECO:0000318"/>
    <property type="project" value="GO_Central"/>
</dbReference>
<dbReference type="GO" id="GO:0055062">
    <property type="term" value="P:phosphate ion homeostasis"/>
    <property type="evidence" value="ECO:0000266"/>
    <property type="project" value="RGD"/>
</dbReference>
<dbReference type="GO" id="GO:0043065">
    <property type="term" value="P:positive regulation of apoptotic process"/>
    <property type="evidence" value="ECO:0000266"/>
    <property type="project" value="RGD"/>
</dbReference>
<dbReference type="GO" id="GO:0090263">
    <property type="term" value="P:positive regulation of canonical Wnt signaling pathway"/>
    <property type="evidence" value="ECO:0000266"/>
    <property type="project" value="RGD"/>
</dbReference>
<dbReference type="GO" id="GO:0045606">
    <property type="term" value="P:positive regulation of epidermal cell differentiation"/>
    <property type="evidence" value="ECO:0000266"/>
    <property type="project" value="RGD"/>
</dbReference>
<dbReference type="GO" id="GO:0010628">
    <property type="term" value="P:positive regulation of gene expression"/>
    <property type="evidence" value="ECO:0000266"/>
    <property type="project" value="RGD"/>
</dbReference>
<dbReference type="GO" id="GO:1902174">
    <property type="term" value="P:positive regulation of keratinocyte apoptotic process"/>
    <property type="evidence" value="ECO:0000266"/>
    <property type="project" value="RGD"/>
</dbReference>
<dbReference type="GO" id="GO:0002092">
    <property type="term" value="P:positive regulation of receptor internalization"/>
    <property type="evidence" value="ECO:0000266"/>
    <property type="project" value="RGD"/>
</dbReference>
<dbReference type="GO" id="GO:0030510">
    <property type="term" value="P:regulation of BMP signaling pathway"/>
    <property type="evidence" value="ECO:0000250"/>
    <property type="project" value="UniProtKB"/>
</dbReference>
<dbReference type="GO" id="GO:0032355">
    <property type="term" value="P:response to estradiol"/>
    <property type="evidence" value="ECO:0000270"/>
    <property type="project" value="RGD"/>
</dbReference>
<dbReference type="GO" id="GO:0051384">
    <property type="term" value="P:response to glucocorticoid"/>
    <property type="evidence" value="ECO:0000270"/>
    <property type="project" value="RGD"/>
</dbReference>
<dbReference type="GO" id="GO:0043434">
    <property type="term" value="P:response to peptide hormone"/>
    <property type="evidence" value="ECO:0000270"/>
    <property type="project" value="RGD"/>
</dbReference>
<dbReference type="GO" id="GO:0016055">
    <property type="term" value="P:Wnt signaling pathway"/>
    <property type="evidence" value="ECO:0000304"/>
    <property type="project" value="RGD"/>
</dbReference>
<dbReference type="FunFam" id="1.10.2000.10:FF:000005">
    <property type="entry name" value="secreted frizzled-related protein 4"/>
    <property type="match status" value="1"/>
</dbReference>
<dbReference type="FunFam" id="2.40.50.120:FF:000011">
    <property type="entry name" value="Secreted frizzled-related sequence protein 4"/>
    <property type="match status" value="1"/>
</dbReference>
<dbReference type="Gene3D" id="2.40.50.120">
    <property type="match status" value="1"/>
</dbReference>
<dbReference type="Gene3D" id="1.10.2000.10">
    <property type="entry name" value="Frizzled cysteine-rich domain"/>
    <property type="match status" value="1"/>
</dbReference>
<dbReference type="InterPro" id="IPR015526">
    <property type="entry name" value="Frizzled/SFRP"/>
</dbReference>
<dbReference type="InterPro" id="IPR020067">
    <property type="entry name" value="Frizzled_dom"/>
</dbReference>
<dbReference type="InterPro" id="IPR036790">
    <property type="entry name" value="Frizzled_dom_sf"/>
</dbReference>
<dbReference type="InterPro" id="IPR001134">
    <property type="entry name" value="Netrin_domain"/>
</dbReference>
<dbReference type="InterPro" id="IPR018933">
    <property type="entry name" value="Netrin_module_non-TIMP"/>
</dbReference>
<dbReference type="InterPro" id="IPR008993">
    <property type="entry name" value="TIMP-like_OB-fold"/>
</dbReference>
<dbReference type="PANTHER" id="PTHR11309">
    <property type="entry name" value="FRIZZLED"/>
    <property type="match status" value="1"/>
</dbReference>
<dbReference type="PANTHER" id="PTHR11309:SF7">
    <property type="entry name" value="SECRETED FRIZZLED-RELATED PROTEIN 4"/>
    <property type="match status" value="1"/>
</dbReference>
<dbReference type="Pfam" id="PF01392">
    <property type="entry name" value="Fz"/>
    <property type="match status" value="1"/>
</dbReference>
<dbReference type="Pfam" id="PF01759">
    <property type="entry name" value="NTR"/>
    <property type="match status" value="1"/>
</dbReference>
<dbReference type="SMART" id="SM00643">
    <property type="entry name" value="C345C"/>
    <property type="match status" value="1"/>
</dbReference>
<dbReference type="SMART" id="SM00063">
    <property type="entry name" value="FRI"/>
    <property type="match status" value="1"/>
</dbReference>
<dbReference type="SUPFAM" id="SSF63501">
    <property type="entry name" value="Frizzled cysteine-rich domain"/>
    <property type="match status" value="1"/>
</dbReference>
<dbReference type="SUPFAM" id="SSF50242">
    <property type="entry name" value="TIMP-like"/>
    <property type="match status" value="1"/>
</dbReference>
<dbReference type="PROSITE" id="PS50038">
    <property type="entry name" value="FZ"/>
    <property type="match status" value="1"/>
</dbReference>
<dbReference type="PROSITE" id="PS50189">
    <property type="entry name" value="NTR"/>
    <property type="match status" value="1"/>
</dbReference>
<accession>Q9JLS4</accession>
<accession>O35222</accession>
<accession>Q9JLS5</accession>
<reference key="1">
    <citation type="journal article" date="1997" name="FEBS Lett.">
        <title>DDC-4, an apoptosis-associated gene, is a secreted frizzled relative.</title>
        <authorList>
            <person name="Wolf V."/>
            <person name="Ke G."/>
            <person name="Dharmarajan A.M."/>
            <person name="Bielke W."/>
            <person name="Artuso L."/>
            <person name="Saurer S."/>
            <person name="Friis R.R."/>
        </authorList>
    </citation>
    <scope>NUCLEOTIDE SEQUENCE [MRNA]</scope>
    <source>
        <strain>Sprague-Dawley</strain>
        <tissue>Corpus luteum</tissue>
    </source>
</reference>
<reference key="2">
    <citation type="journal article" date="2001" name="Biochem. Biophys. Res. Commun.">
        <title>Transcriptional activity of the promoter region of rat frizzled-related protein gene.</title>
        <authorList>
            <person name="Yam J.W.P."/>
            <person name="Chan K.W."/>
            <person name="Wong V.K.W."/>
            <person name="Hsiao W.L.W."/>
        </authorList>
    </citation>
    <scope>NUCLEOTIDE SEQUENCE [GENOMIC DNA / MRNA]</scope>
    <source>
        <strain>Fischer</strain>
        <tissue>Fibroblast</tissue>
        <tissue>Liver</tissue>
    </source>
</reference>
<reference key="3">
    <citation type="journal article" date="1998" name="Biol. Reprod.">
        <title>Apoptosis-associated gene expression in the corpus luteum of the rat.</title>
        <authorList>
            <person name="Guo K."/>
            <person name="Wolf V."/>
            <person name="Dharmarajan A.M."/>
            <person name="Feng Z."/>
            <person name="Bielke W."/>
            <person name="Saurer S."/>
            <person name="Friis R."/>
        </authorList>
    </citation>
    <scope>NUCLEOTIDE SEQUENCE [MRNA] OF 1-140</scope>
    <source>
        <strain>Sprague-Dawley</strain>
    </source>
</reference>
<reference key="4">
    <citation type="journal article" date="2002" name="J. Mol. Endocrinol.">
        <title>Differential expression of secreted frizzled-related protein 4 in decidual cells during pregnancy.</title>
        <authorList>
            <person name="Fujita M."/>
            <person name="Ogawa S."/>
            <person name="Fukuoka H."/>
            <person name="Tsukui T."/>
            <person name="Nemoto N."/>
            <person name="Tsutsumi O."/>
            <person name="Ouchi Y."/>
            <person name="Inoue S."/>
        </authorList>
    </citation>
    <scope>NUCLEOTIDE SEQUENCE [MRNA] OF 190-347</scope>
    <scope>DEVELOPMENTAL STAGE</scope>
    <scope>INDUCTION</scope>
    <scope>FUNCTION</scope>
    <source>
        <strain>Wistar</strain>
        <tissue>Uterus</tissue>
    </source>
</reference>
<reference key="5">
    <citation type="journal article" date="2003" name="Endocrinology">
        <title>Expression and localization of secreted frizzled-related protein-4 in the rodent ovary: evidence for selective up-regulation in luteinized granulosa cells.</title>
        <authorList>
            <person name="Hsieh M."/>
            <person name="Mulders S.M."/>
            <person name="Friis R.R."/>
            <person name="Dharmarajan A."/>
            <person name="Richards J.S."/>
        </authorList>
    </citation>
    <scope>FUNCTION</scope>
    <scope>TISSUE SPECIFICITY</scope>
    <scope>INDUCTION</scope>
</reference>
<protein>
    <recommendedName>
        <fullName>Secreted frizzled-related protein 4</fullName>
        <shortName>sFRP-4</shortName>
    </recommendedName>
    <alternativeName>
        <fullName>DDC-4 protein</fullName>
    </alternativeName>
</protein>
<feature type="signal peptide" evidence="4">
    <location>
        <begin position="1"/>
        <end position="18"/>
    </location>
</feature>
<feature type="chain" id="PRO_0000032553" description="Secreted frizzled-related protein 4">
    <location>
        <begin position="19"/>
        <end position="348"/>
    </location>
</feature>
<feature type="domain" description="FZ" evidence="5">
    <location>
        <begin position="19"/>
        <end position="139"/>
    </location>
</feature>
<feature type="domain" description="NTR" evidence="6">
    <location>
        <begin position="178"/>
        <end position="296"/>
    </location>
</feature>
<feature type="region of interest" description="Disordered" evidence="7">
    <location>
        <begin position="289"/>
        <end position="348"/>
    </location>
</feature>
<feature type="compositionally biased region" description="Basic and acidic residues" evidence="7">
    <location>
        <begin position="289"/>
        <end position="303"/>
    </location>
</feature>
<feature type="compositionally biased region" description="Basic residues" evidence="7">
    <location>
        <begin position="330"/>
        <end position="348"/>
    </location>
</feature>
<feature type="glycosylation site" description="N-linked (GlcNAc...) asparagine" evidence="4">
    <location>
        <position position="38"/>
    </location>
</feature>
<feature type="glycosylation site" description="N-linked (GlcNAc...) asparagine" evidence="4">
    <location>
        <position position="68"/>
    </location>
</feature>
<feature type="glycosylation site" description="N-linked (GlcNAc...) asparagine" evidence="4">
    <location>
        <position position="116"/>
    </location>
</feature>
<feature type="glycosylation site" description="N-linked (GlcNAc...) asparagine" evidence="4">
    <location>
        <position position="194"/>
    </location>
</feature>
<feature type="glycosylation site" description="N-linked (GlcNAc...) asparagine" evidence="4">
    <location>
        <position position="240"/>
    </location>
</feature>
<feature type="disulfide bond" evidence="1">
    <location>
        <begin position="24"/>
        <end position="85"/>
    </location>
</feature>
<feature type="disulfide bond" evidence="1">
    <location>
        <begin position="32"/>
        <end position="78"/>
    </location>
</feature>
<feature type="disulfide bond" evidence="1">
    <location>
        <begin position="69"/>
        <end position="108"/>
    </location>
</feature>
<feature type="disulfide bond" evidence="1">
    <location>
        <begin position="97"/>
        <end position="136"/>
    </location>
</feature>
<feature type="disulfide bond" evidence="1">
    <location>
        <begin position="101"/>
        <end position="125"/>
    </location>
</feature>
<feature type="sequence conflict" description="In Ref. 2; AAF66480/AAF66481." evidence="12" ref="2">
    <original>CV</original>
    <variation>WL</variation>
    <location>
        <begin position="12"/>
        <end position="13"/>
    </location>
</feature>
<feature type="sequence conflict" description="In Ref. 2; AAF66480." evidence="12" ref="2">
    <original>E</original>
    <variation>G</variation>
    <location>
        <position position="59"/>
    </location>
</feature>
<feature type="sequence conflict" description="In Ref. 2; AAF66480/AAF66481." evidence="12" ref="2">
    <original>R</original>
    <variation>S</variation>
    <location>
        <position position="74"/>
    </location>
</feature>
<feature type="sequence conflict" description="In Ref. 2; AAF66481." evidence="12" ref="2">
    <original>C</original>
    <variation>S</variation>
    <location>
        <position position="101"/>
    </location>
</feature>
<proteinExistence type="evidence at transcript level"/>
<evidence type="ECO:0000250" key="1"/>
<evidence type="ECO:0000250" key="2">
    <source>
        <dbReference type="UniProtKB" id="Q6FHJ7"/>
    </source>
</evidence>
<evidence type="ECO:0000250" key="3">
    <source>
        <dbReference type="UniProtKB" id="Q9Z1N6"/>
    </source>
</evidence>
<evidence type="ECO:0000255" key="4"/>
<evidence type="ECO:0000255" key="5">
    <source>
        <dbReference type="PROSITE-ProRule" id="PRU00090"/>
    </source>
</evidence>
<evidence type="ECO:0000255" key="6">
    <source>
        <dbReference type="PROSITE-ProRule" id="PRU00295"/>
    </source>
</evidence>
<evidence type="ECO:0000256" key="7">
    <source>
        <dbReference type="SAM" id="MobiDB-lite"/>
    </source>
</evidence>
<evidence type="ECO:0000269" key="8">
    <source>
    </source>
</evidence>
<evidence type="ECO:0000269" key="9">
    <source>
    </source>
</evidence>
<evidence type="ECO:0000303" key="10">
    <source>
    </source>
</evidence>
<evidence type="ECO:0000303" key="11">
    <source>
    </source>
</evidence>
<evidence type="ECO:0000305" key="12"/>
<name>SFRP4_RAT</name>